<evidence type="ECO:0000255" key="1"/>
<evidence type="ECO:0000305" key="2"/>
<organism>
    <name type="scientific">Bacillus anthracis</name>
    <dbReference type="NCBI Taxonomy" id="1392"/>
    <lineage>
        <taxon>Bacteria</taxon>
        <taxon>Bacillati</taxon>
        <taxon>Bacillota</taxon>
        <taxon>Bacilli</taxon>
        <taxon>Bacillales</taxon>
        <taxon>Bacillaceae</taxon>
        <taxon>Bacillus</taxon>
        <taxon>Bacillus cereus group</taxon>
    </lineage>
</organism>
<name>Y6512_BACAN</name>
<accession>Q9RN19</accession>
<dbReference type="EMBL" id="AF188935">
    <property type="protein sequence ID" value="AAF13618.1"/>
    <property type="molecule type" value="Genomic_DNA"/>
</dbReference>
<dbReference type="EMBL" id="AE011191">
    <property type="protein sequence ID" value="AAM26173.1"/>
    <property type="molecule type" value="Genomic_DNA"/>
</dbReference>
<dbReference type="EMBL" id="AE017335">
    <property type="protein sequence ID" value="AAT28942.2"/>
    <property type="molecule type" value="Genomic_DNA"/>
</dbReference>
<dbReference type="RefSeq" id="NP_053168.1">
    <property type="nucleotide sequence ID" value="NC_002146.1"/>
</dbReference>
<dbReference type="RefSeq" id="WP_000862946.1">
    <property type="nucleotide sequence ID" value="NZ_VTZL01000009.1"/>
</dbReference>
<dbReference type="SMR" id="Q9RN19"/>
<dbReference type="GeneID" id="45025327"/>
<dbReference type="KEGG" id="banh:HYU01_29060"/>
<dbReference type="KEGG" id="bar:GBAA_pXO2_0012"/>
<dbReference type="HOGENOM" id="CLU_2491468_0_0_9"/>
<dbReference type="OMA" id="HYICIMF"/>
<dbReference type="Proteomes" id="UP000000594">
    <property type="component" value="Plasmid pXO2"/>
</dbReference>
<dbReference type="GO" id="GO:0016020">
    <property type="term" value="C:membrane"/>
    <property type="evidence" value="ECO:0007669"/>
    <property type="project" value="UniProtKB-SubCell"/>
</dbReference>
<reference key="1">
    <citation type="journal article" date="1999" name="J. Appl. Microbiol.">
        <title>Sequence, assembly and analysis of pXO1 and pXO2.</title>
        <authorList>
            <person name="Okinaka R.T."/>
            <person name="Cloud K."/>
            <person name="Hampton O."/>
            <person name="Hoffmaster A."/>
            <person name="Hill K.K."/>
            <person name="Keim P."/>
            <person name="Koehler T."/>
            <person name="Lamke G."/>
            <person name="Kumano S."/>
            <person name="Manter D."/>
            <person name="Martinez Y."/>
            <person name="Ricke D."/>
            <person name="Svensson R."/>
            <person name="Jackson P.J."/>
        </authorList>
    </citation>
    <scope>NUCLEOTIDE SEQUENCE [GENOMIC DNA]</scope>
    <source>
        <strain>Pasteur</strain>
    </source>
</reference>
<reference key="2">
    <citation type="journal article" date="2002" name="Science">
        <title>Comparative genome sequencing for discovery of novel polymorphisms in Bacillus anthracis.</title>
        <authorList>
            <person name="Read T.D."/>
            <person name="Salzberg S.L."/>
            <person name="Pop M."/>
            <person name="Shumway M.F."/>
            <person name="Umayam L."/>
            <person name="Jiang L."/>
            <person name="Holtzapple E."/>
            <person name="Busch J.D."/>
            <person name="Smith K.L."/>
            <person name="Schupp J.M."/>
            <person name="Solomon D."/>
            <person name="Keim P."/>
            <person name="Fraser C.M."/>
        </authorList>
    </citation>
    <scope>NUCLEOTIDE SEQUENCE [GENOMIC DNA]</scope>
    <source>
        <strain>Ames / isolate Florida / A2012</strain>
    </source>
</reference>
<reference key="3">
    <citation type="journal article" date="2009" name="J. Bacteriol.">
        <title>The complete genome sequence of Bacillus anthracis Ames 'Ancestor'.</title>
        <authorList>
            <person name="Ravel J."/>
            <person name="Jiang L."/>
            <person name="Stanley S.T."/>
            <person name="Wilson M.R."/>
            <person name="Decker R.S."/>
            <person name="Read T.D."/>
            <person name="Worsham P."/>
            <person name="Keim P.S."/>
            <person name="Salzberg S.L."/>
            <person name="Fraser-Liggett C.M."/>
            <person name="Rasko D.A."/>
        </authorList>
    </citation>
    <scope>NUCLEOTIDE SEQUENCE [LARGE SCALE GENOMIC DNA]</scope>
    <source>
        <strain>Ames ancestor</strain>
    </source>
</reference>
<geneLocation type="plasmid">
    <name>pXO2</name>
</geneLocation>
<proteinExistence type="predicted"/>
<comment type="subcellular location">
    <subcellularLocation>
        <location evidence="2">Membrane</location>
        <topology evidence="2">Single-pass membrane protein</topology>
    </subcellularLocation>
</comment>
<protein>
    <recommendedName>
        <fullName>Uncharacterized protein pXO2-13/BXB0012/GBAA_pXO2_0012</fullName>
    </recommendedName>
</protein>
<gene>
    <name type="ordered locus">pXO2-13</name>
    <name type="ordered locus">BXB0012</name>
    <name type="ordered locus">GBAA_pXO2_0012</name>
</gene>
<keyword id="KW-0472">Membrane</keyword>
<keyword id="KW-0614">Plasmid</keyword>
<keyword id="KW-1185">Reference proteome</keyword>
<keyword id="KW-0812">Transmembrane</keyword>
<keyword id="KW-1133">Transmembrane helix</keyword>
<sequence>MKVIDIANRRRIYFEMKQQELRASILMTVAGFIIAFAILVFQISFELGHLYHYIVTFAFLTYLSLHLYSNNKLARKIEKKQQGY</sequence>
<feature type="chain" id="PRO_0000216834" description="Uncharacterized protein pXO2-13/BXB0012/GBAA_pXO2_0012">
    <location>
        <begin position="1"/>
        <end position="84"/>
    </location>
</feature>
<feature type="transmembrane region" description="Helical" evidence="1">
    <location>
        <begin position="25"/>
        <end position="45"/>
    </location>
</feature>